<organism>
    <name type="scientific">Francisella tularensis subsp. tularensis (strain SCHU S4 / Schu 4)</name>
    <dbReference type="NCBI Taxonomy" id="177416"/>
    <lineage>
        <taxon>Bacteria</taxon>
        <taxon>Pseudomonadati</taxon>
        <taxon>Pseudomonadota</taxon>
        <taxon>Gammaproteobacteria</taxon>
        <taxon>Thiotrichales</taxon>
        <taxon>Francisellaceae</taxon>
        <taxon>Francisella</taxon>
    </lineage>
</organism>
<proteinExistence type="evidence at protein level"/>
<accession>Q5NGZ6</accession>
<name>PTH_FRATT</name>
<protein>
    <recommendedName>
        <fullName evidence="1 3">Peptidyl-tRNA hydrolase</fullName>
        <shortName evidence="1">Pth</shortName>
        <ecNumber evidence="1">3.1.1.29</ecNumber>
    </recommendedName>
</protein>
<feature type="chain" id="PRO_0000187740" description="Peptidyl-tRNA hydrolase">
    <location>
        <begin position="1"/>
        <end position="191"/>
    </location>
</feature>
<feature type="active site" description="Proton acceptor" evidence="1">
    <location>
        <position position="22"/>
    </location>
</feature>
<feature type="binding site" evidence="1">
    <location>
        <position position="17"/>
    </location>
    <ligand>
        <name>tRNA</name>
        <dbReference type="ChEBI" id="CHEBI:17843"/>
    </ligand>
</feature>
<feature type="binding site" evidence="1">
    <location>
        <position position="68"/>
    </location>
    <ligand>
        <name>tRNA</name>
        <dbReference type="ChEBI" id="CHEBI:17843"/>
    </ligand>
</feature>
<feature type="binding site" evidence="1">
    <location>
        <position position="70"/>
    </location>
    <ligand>
        <name>tRNA</name>
        <dbReference type="ChEBI" id="CHEBI:17843"/>
    </ligand>
</feature>
<feature type="binding site" evidence="1">
    <location>
        <position position="116"/>
    </location>
    <ligand>
        <name>tRNA</name>
        <dbReference type="ChEBI" id="CHEBI:17843"/>
    </ligand>
</feature>
<feature type="site" description="Discriminates between blocked and unblocked aminoacyl-tRNA" evidence="1">
    <location>
        <position position="12"/>
    </location>
</feature>
<feature type="site" description="Stabilizes the basic form of H active site to accept a proton" evidence="1">
    <location>
        <position position="95"/>
    </location>
</feature>
<feature type="strand" evidence="5">
    <location>
        <begin position="6"/>
        <end position="9"/>
    </location>
</feature>
<feature type="turn" evidence="5">
    <location>
        <begin position="15"/>
        <end position="19"/>
    </location>
</feature>
<feature type="helix" evidence="5">
    <location>
        <begin position="21"/>
        <end position="23"/>
    </location>
</feature>
<feature type="helix" evidence="5">
    <location>
        <begin position="24"/>
        <end position="35"/>
    </location>
</feature>
<feature type="strand" evidence="5">
    <location>
        <begin position="41"/>
        <end position="43"/>
    </location>
</feature>
<feature type="helix" evidence="5">
    <location>
        <begin position="44"/>
        <end position="46"/>
    </location>
</feature>
<feature type="strand" evidence="5">
    <location>
        <begin position="48"/>
        <end position="55"/>
    </location>
</feature>
<feature type="strand" evidence="5">
    <location>
        <begin position="58"/>
        <end position="67"/>
    </location>
</feature>
<feature type="helix" evidence="5">
    <location>
        <begin position="69"/>
        <end position="71"/>
    </location>
</feature>
<feature type="helix" evidence="5">
    <location>
        <begin position="72"/>
        <end position="83"/>
    </location>
</feature>
<feature type="helix" evidence="5">
    <location>
        <begin position="87"/>
        <end position="89"/>
    </location>
</feature>
<feature type="strand" evidence="5">
    <location>
        <begin position="90"/>
        <end position="99"/>
    </location>
</feature>
<feature type="strand" evidence="5">
    <location>
        <begin position="104"/>
        <end position="109"/>
    </location>
</feature>
<feature type="helix" evidence="5">
    <location>
        <begin position="116"/>
        <end position="125"/>
    </location>
</feature>
<feature type="strand" evidence="5">
    <location>
        <begin position="130"/>
        <end position="136"/>
    </location>
</feature>
<feature type="helix" evidence="5">
    <location>
        <begin position="143"/>
        <end position="145"/>
    </location>
</feature>
<feature type="helix" evidence="5">
    <location>
        <begin position="146"/>
        <end position="150"/>
    </location>
</feature>
<feature type="helix" evidence="5">
    <location>
        <begin position="156"/>
        <end position="171"/>
    </location>
</feature>
<feature type="helix" evidence="5">
    <location>
        <begin position="173"/>
        <end position="177"/>
    </location>
</feature>
<reference key="1">
    <citation type="journal article" date="2005" name="Nat. Genet.">
        <title>The complete genome sequence of Francisella tularensis, the causative agent of tularemia.</title>
        <authorList>
            <person name="Larsson P."/>
            <person name="Oyston P.C.F."/>
            <person name="Chain P."/>
            <person name="Chu M.C."/>
            <person name="Duffield M."/>
            <person name="Fuxelius H.-H."/>
            <person name="Garcia E."/>
            <person name="Haelltorp G."/>
            <person name="Johansson D."/>
            <person name="Isherwood K.E."/>
            <person name="Karp P.D."/>
            <person name="Larsson E."/>
            <person name="Liu Y."/>
            <person name="Michell S."/>
            <person name="Prior J."/>
            <person name="Prior R."/>
            <person name="Malfatti S."/>
            <person name="Sjoestedt A."/>
            <person name="Svensson K."/>
            <person name="Thompson N."/>
            <person name="Vergez L."/>
            <person name="Wagg J.K."/>
            <person name="Wren B.W."/>
            <person name="Lindler L.E."/>
            <person name="Andersson S.G.E."/>
            <person name="Forsman M."/>
            <person name="Titball R.W."/>
        </authorList>
    </citation>
    <scope>NUCLEOTIDE SEQUENCE [LARGE SCALE GENOMIC DNA]</scope>
    <source>
        <strain>SCHU S4 / Schu 4</strain>
    </source>
</reference>
<reference evidence="4" key="2">
    <citation type="journal article" date="2011" name="Acta Crystallogr. F">
        <title>Structure of Francisella tularensis peptidyl-tRNA hydrolase.</title>
        <authorList>
            <person name="Clarke T.E."/>
            <person name="Romanov V."/>
            <person name="Lam R."/>
            <person name="Gothe S.A."/>
            <person name="Peddi S.R."/>
            <person name="Razumova E.B."/>
            <person name="Lipman R.S."/>
            <person name="Branstrom A.A."/>
            <person name="Chirgadze N.Y."/>
        </authorList>
    </citation>
    <scope>X-RAY CRYSTALLOGRAPHY (2.25 ANGSTROMS) OF 1-188</scope>
    <scope>SUBUNIT</scope>
    <source>
        <strain>SCHU S4 / Schu 4</strain>
    </source>
</reference>
<keyword id="KW-0002">3D-structure</keyword>
<keyword id="KW-0963">Cytoplasm</keyword>
<keyword id="KW-0378">Hydrolase</keyword>
<keyword id="KW-1185">Reference proteome</keyword>
<keyword id="KW-0694">RNA-binding</keyword>
<keyword id="KW-0820">tRNA-binding</keyword>
<evidence type="ECO:0000255" key="1">
    <source>
        <dbReference type="HAMAP-Rule" id="MF_00083"/>
    </source>
</evidence>
<evidence type="ECO:0000269" key="2">
    <source>
    </source>
</evidence>
<evidence type="ECO:0000303" key="3">
    <source>
    </source>
</evidence>
<evidence type="ECO:0007744" key="4">
    <source>
        <dbReference type="PDB" id="3NEA"/>
    </source>
</evidence>
<evidence type="ECO:0007829" key="5">
    <source>
        <dbReference type="PDB" id="3NEA"/>
    </source>
</evidence>
<gene>
    <name evidence="1" type="primary">pth</name>
    <name type="ordered locus">FTT_0680c</name>
</gene>
<sequence length="191" mass="21137">MPKIKMIIGLGNIGKEYQDTRHNVGEWFIAKIAQDNNQSFSSNPKLNCNLAKVSIDYNNVVLVFPTTYMNNSGLAVSKVANFYKIAPAEILVVHDELDIDSGEIRLKKGGGHGGHNGLRSINQHLGTNDYLRLRIGIGHPGHKSKVANYVLSNPSIAQKKDIDSAIDNGICFLDDIINYKLEPVMQKLHTK</sequence>
<dbReference type="EC" id="3.1.1.29" evidence="1"/>
<dbReference type="EMBL" id="AJ749949">
    <property type="protein sequence ID" value="CAG45313.1"/>
    <property type="molecule type" value="Genomic_DNA"/>
</dbReference>
<dbReference type="RefSeq" id="WP_003020470.1">
    <property type="nucleotide sequence ID" value="NC_006570.2"/>
</dbReference>
<dbReference type="RefSeq" id="YP_169696.1">
    <property type="nucleotide sequence ID" value="NC_006570.2"/>
</dbReference>
<dbReference type="PDB" id="3NEA">
    <property type="method" value="X-ray"/>
    <property type="resolution" value="2.25 A"/>
    <property type="chains" value="A=1-188"/>
</dbReference>
<dbReference type="PDBsum" id="3NEA"/>
<dbReference type="SMR" id="Q5NGZ6"/>
<dbReference type="STRING" id="177416.FTT_0680c"/>
<dbReference type="DNASU" id="3191676"/>
<dbReference type="EnsemblBacteria" id="CAG45313">
    <property type="protein sequence ID" value="CAG45313"/>
    <property type="gene ID" value="FTT_0680c"/>
</dbReference>
<dbReference type="KEGG" id="ftu:FTT_0680c"/>
<dbReference type="eggNOG" id="COG0193">
    <property type="taxonomic scope" value="Bacteria"/>
</dbReference>
<dbReference type="OrthoDB" id="9800507at2"/>
<dbReference type="EvolutionaryTrace" id="Q5NGZ6"/>
<dbReference type="Proteomes" id="UP000001174">
    <property type="component" value="Chromosome"/>
</dbReference>
<dbReference type="GO" id="GO:0005737">
    <property type="term" value="C:cytoplasm"/>
    <property type="evidence" value="ECO:0007669"/>
    <property type="project" value="UniProtKB-SubCell"/>
</dbReference>
<dbReference type="GO" id="GO:0004045">
    <property type="term" value="F:peptidyl-tRNA hydrolase activity"/>
    <property type="evidence" value="ECO:0007669"/>
    <property type="project" value="UniProtKB-UniRule"/>
</dbReference>
<dbReference type="GO" id="GO:0000049">
    <property type="term" value="F:tRNA binding"/>
    <property type="evidence" value="ECO:0007669"/>
    <property type="project" value="UniProtKB-UniRule"/>
</dbReference>
<dbReference type="GO" id="GO:0006515">
    <property type="term" value="P:protein quality control for misfolded or incompletely synthesized proteins"/>
    <property type="evidence" value="ECO:0007669"/>
    <property type="project" value="UniProtKB-UniRule"/>
</dbReference>
<dbReference type="GO" id="GO:0072344">
    <property type="term" value="P:rescue of stalled ribosome"/>
    <property type="evidence" value="ECO:0007669"/>
    <property type="project" value="UniProtKB-UniRule"/>
</dbReference>
<dbReference type="CDD" id="cd00462">
    <property type="entry name" value="PTH"/>
    <property type="match status" value="1"/>
</dbReference>
<dbReference type="FunFam" id="3.40.50.1470:FF:000001">
    <property type="entry name" value="Peptidyl-tRNA hydrolase"/>
    <property type="match status" value="1"/>
</dbReference>
<dbReference type="Gene3D" id="3.40.50.1470">
    <property type="entry name" value="Peptidyl-tRNA hydrolase"/>
    <property type="match status" value="1"/>
</dbReference>
<dbReference type="HAMAP" id="MF_00083">
    <property type="entry name" value="Pept_tRNA_hydro_bact"/>
    <property type="match status" value="1"/>
</dbReference>
<dbReference type="InterPro" id="IPR001328">
    <property type="entry name" value="Pept_tRNA_hydro"/>
</dbReference>
<dbReference type="InterPro" id="IPR018171">
    <property type="entry name" value="Pept_tRNA_hydro_CS"/>
</dbReference>
<dbReference type="InterPro" id="IPR036416">
    <property type="entry name" value="Pept_tRNA_hydro_sf"/>
</dbReference>
<dbReference type="NCBIfam" id="TIGR00447">
    <property type="entry name" value="pth"/>
    <property type="match status" value="1"/>
</dbReference>
<dbReference type="PANTHER" id="PTHR17224">
    <property type="entry name" value="PEPTIDYL-TRNA HYDROLASE"/>
    <property type="match status" value="1"/>
</dbReference>
<dbReference type="PANTHER" id="PTHR17224:SF1">
    <property type="entry name" value="PEPTIDYL-TRNA HYDROLASE"/>
    <property type="match status" value="1"/>
</dbReference>
<dbReference type="Pfam" id="PF01195">
    <property type="entry name" value="Pept_tRNA_hydro"/>
    <property type="match status" value="1"/>
</dbReference>
<dbReference type="SUPFAM" id="SSF53178">
    <property type="entry name" value="Peptidyl-tRNA hydrolase-like"/>
    <property type="match status" value="1"/>
</dbReference>
<dbReference type="PROSITE" id="PS01196">
    <property type="entry name" value="PEPT_TRNA_HYDROL_2"/>
    <property type="match status" value="1"/>
</dbReference>
<comment type="function">
    <text evidence="1">Hydrolyzes ribosome-free peptidyl-tRNAs (with 1 or more amino acids incorporated), which drop off the ribosome during protein synthesis, or as a result of ribosome stalling.</text>
</comment>
<comment type="function">
    <text evidence="1">Catalyzes the release of premature peptidyl moieties from peptidyl-tRNA molecules trapped in stalled 50S ribosomal subunits, and thus maintains levels of free tRNAs and 50S ribosomes.</text>
</comment>
<comment type="catalytic activity">
    <reaction evidence="1">
        <text>an N-acyl-L-alpha-aminoacyl-tRNA + H2O = an N-acyl-L-amino acid + a tRNA + H(+)</text>
        <dbReference type="Rhea" id="RHEA:54448"/>
        <dbReference type="Rhea" id="RHEA-COMP:10123"/>
        <dbReference type="Rhea" id="RHEA-COMP:13883"/>
        <dbReference type="ChEBI" id="CHEBI:15377"/>
        <dbReference type="ChEBI" id="CHEBI:15378"/>
        <dbReference type="ChEBI" id="CHEBI:59874"/>
        <dbReference type="ChEBI" id="CHEBI:78442"/>
        <dbReference type="ChEBI" id="CHEBI:138191"/>
        <dbReference type="EC" id="3.1.1.29"/>
    </reaction>
</comment>
<comment type="subunit">
    <text evidence="1 2">Monomer.</text>
</comment>
<comment type="subcellular location">
    <subcellularLocation>
        <location evidence="1">Cytoplasm</location>
    </subcellularLocation>
</comment>
<comment type="similarity">
    <text evidence="1">Belongs to the PTH family.</text>
</comment>